<keyword id="KW-0004">4Fe-4S</keyword>
<keyword id="KW-0028">Amino-acid biosynthesis</keyword>
<keyword id="KW-0100">Branched-chain amino acid biosynthesis</keyword>
<keyword id="KW-0408">Iron</keyword>
<keyword id="KW-0411">Iron-sulfur</keyword>
<keyword id="KW-0432">Leucine biosynthesis</keyword>
<keyword id="KW-0456">Lyase</keyword>
<keyword id="KW-0479">Metal-binding</keyword>
<feature type="chain" id="PRO_1000063552" description="3-isopropylmalate dehydratase large subunit">
    <location>
        <begin position="1"/>
        <end position="466"/>
    </location>
</feature>
<feature type="binding site" evidence="1">
    <location>
        <position position="347"/>
    </location>
    <ligand>
        <name>[4Fe-4S] cluster</name>
        <dbReference type="ChEBI" id="CHEBI:49883"/>
    </ligand>
</feature>
<feature type="binding site" evidence="1">
    <location>
        <position position="407"/>
    </location>
    <ligand>
        <name>[4Fe-4S] cluster</name>
        <dbReference type="ChEBI" id="CHEBI:49883"/>
    </ligand>
</feature>
<feature type="binding site" evidence="1">
    <location>
        <position position="410"/>
    </location>
    <ligand>
        <name>[4Fe-4S] cluster</name>
        <dbReference type="ChEBI" id="CHEBI:49883"/>
    </ligand>
</feature>
<evidence type="ECO:0000255" key="1">
    <source>
        <dbReference type="HAMAP-Rule" id="MF_01026"/>
    </source>
</evidence>
<protein>
    <recommendedName>
        <fullName evidence="1">3-isopropylmalate dehydratase large subunit</fullName>
        <ecNumber evidence="1">4.2.1.33</ecNumber>
    </recommendedName>
    <alternativeName>
        <fullName evidence="1">Alpha-IPM isomerase</fullName>
        <shortName evidence="1">IPMI</shortName>
    </alternativeName>
    <alternativeName>
        <fullName evidence="1">Isopropylmalate isomerase</fullName>
    </alternativeName>
</protein>
<dbReference type="EC" id="4.2.1.33" evidence="1"/>
<dbReference type="EMBL" id="CP000243">
    <property type="protein sequence ID" value="ABE05589.1"/>
    <property type="molecule type" value="Genomic_DNA"/>
</dbReference>
<dbReference type="RefSeq" id="WP_001140652.1">
    <property type="nucleotide sequence ID" value="NZ_CP064825.1"/>
</dbReference>
<dbReference type="SMR" id="Q1RGC5"/>
<dbReference type="GeneID" id="75202111"/>
<dbReference type="KEGG" id="eci:UTI89_C0079"/>
<dbReference type="HOGENOM" id="CLU_006714_3_4_6"/>
<dbReference type="UniPathway" id="UPA00048">
    <property type="reaction ID" value="UER00071"/>
</dbReference>
<dbReference type="Proteomes" id="UP000001952">
    <property type="component" value="Chromosome"/>
</dbReference>
<dbReference type="GO" id="GO:0003861">
    <property type="term" value="F:3-isopropylmalate dehydratase activity"/>
    <property type="evidence" value="ECO:0007669"/>
    <property type="project" value="UniProtKB-UniRule"/>
</dbReference>
<dbReference type="GO" id="GO:0051539">
    <property type="term" value="F:4 iron, 4 sulfur cluster binding"/>
    <property type="evidence" value="ECO:0007669"/>
    <property type="project" value="UniProtKB-KW"/>
</dbReference>
<dbReference type="GO" id="GO:0046872">
    <property type="term" value="F:metal ion binding"/>
    <property type="evidence" value="ECO:0007669"/>
    <property type="project" value="UniProtKB-KW"/>
</dbReference>
<dbReference type="GO" id="GO:0009098">
    <property type="term" value="P:L-leucine biosynthetic process"/>
    <property type="evidence" value="ECO:0007669"/>
    <property type="project" value="UniProtKB-UniRule"/>
</dbReference>
<dbReference type="CDD" id="cd01583">
    <property type="entry name" value="IPMI"/>
    <property type="match status" value="1"/>
</dbReference>
<dbReference type="FunFam" id="3.30.499.10:FF:000006">
    <property type="entry name" value="3-isopropylmalate dehydratase large subunit"/>
    <property type="match status" value="1"/>
</dbReference>
<dbReference type="FunFam" id="3.30.499.10:FF:000007">
    <property type="entry name" value="3-isopropylmalate dehydratase large subunit"/>
    <property type="match status" value="1"/>
</dbReference>
<dbReference type="Gene3D" id="3.30.499.10">
    <property type="entry name" value="Aconitase, domain 3"/>
    <property type="match status" value="2"/>
</dbReference>
<dbReference type="HAMAP" id="MF_01026">
    <property type="entry name" value="LeuC_type1"/>
    <property type="match status" value="1"/>
</dbReference>
<dbReference type="InterPro" id="IPR004430">
    <property type="entry name" value="3-IsopropMal_deHydase_lsu"/>
</dbReference>
<dbReference type="InterPro" id="IPR015931">
    <property type="entry name" value="Acnase/IPM_dHydase_lsu_aba_1/3"/>
</dbReference>
<dbReference type="InterPro" id="IPR001030">
    <property type="entry name" value="Acoase/IPM_deHydtase_lsu_aba"/>
</dbReference>
<dbReference type="InterPro" id="IPR018136">
    <property type="entry name" value="Aconitase_4Fe-4S_BS"/>
</dbReference>
<dbReference type="InterPro" id="IPR036008">
    <property type="entry name" value="Aconitase_4Fe-4S_dom"/>
</dbReference>
<dbReference type="InterPro" id="IPR050067">
    <property type="entry name" value="IPM_dehydratase_rel_enz"/>
</dbReference>
<dbReference type="InterPro" id="IPR033941">
    <property type="entry name" value="IPMI_cat"/>
</dbReference>
<dbReference type="NCBIfam" id="TIGR00170">
    <property type="entry name" value="leuC"/>
    <property type="match status" value="1"/>
</dbReference>
<dbReference type="NCBIfam" id="NF004016">
    <property type="entry name" value="PRK05478.1"/>
    <property type="match status" value="1"/>
</dbReference>
<dbReference type="NCBIfam" id="NF009116">
    <property type="entry name" value="PRK12466.1"/>
    <property type="match status" value="1"/>
</dbReference>
<dbReference type="PANTHER" id="PTHR43822:SF9">
    <property type="entry name" value="3-ISOPROPYLMALATE DEHYDRATASE"/>
    <property type="match status" value="1"/>
</dbReference>
<dbReference type="PANTHER" id="PTHR43822">
    <property type="entry name" value="HOMOACONITASE, MITOCHONDRIAL-RELATED"/>
    <property type="match status" value="1"/>
</dbReference>
<dbReference type="Pfam" id="PF00330">
    <property type="entry name" value="Aconitase"/>
    <property type="match status" value="1"/>
</dbReference>
<dbReference type="PRINTS" id="PR00415">
    <property type="entry name" value="ACONITASE"/>
</dbReference>
<dbReference type="SUPFAM" id="SSF53732">
    <property type="entry name" value="Aconitase iron-sulfur domain"/>
    <property type="match status" value="1"/>
</dbReference>
<dbReference type="PROSITE" id="PS00450">
    <property type="entry name" value="ACONITASE_1"/>
    <property type="match status" value="1"/>
</dbReference>
<dbReference type="PROSITE" id="PS01244">
    <property type="entry name" value="ACONITASE_2"/>
    <property type="match status" value="1"/>
</dbReference>
<comment type="function">
    <text evidence="1">Catalyzes the isomerization between 2-isopropylmalate and 3-isopropylmalate, via the formation of 2-isopropylmaleate.</text>
</comment>
<comment type="catalytic activity">
    <reaction evidence="1">
        <text>(2R,3S)-3-isopropylmalate = (2S)-2-isopropylmalate</text>
        <dbReference type="Rhea" id="RHEA:32287"/>
        <dbReference type="ChEBI" id="CHEBI:1178"/>
        <dbReference type="ChEBI" id="CHEBI:35121"/>
        <dbReference type="EC" id="4.2.1.33"/>
    </reaction>
</comment>
<comment type="cofactor">
    <cofactor evidence="1">
        <name>[4Fe-4S] cluster</name>
        <dbReference type="ChEBI" id="CHEBI:49883"/>
    </cofactor>
    <text evidence="1">Binds 1 [4Fe-4S] cluster per subunit.</text>
</comment>
<comment type="pathway">
    <text evidence="1">Amino-acid biosynthesis; L-leucine biosynthesis; L-leucine from 3-methyl-2-oxobutanoate: step 2/4.</text>
</comment>
<comment type="subunit">
    <text evidence="1">Heterodimer of LeuC and LeuD.</text>
</comment>
<comment type="similarity">
    <text evidence="1">Belongs to the aconitase/IPM isomerase family. LeuC type 1 subfamily.</text>
</comment>
<reference key="1">
    <citation type="journal article" date="2006" name="Proc. Natl. Acad. Sci. U.S.A.">
        <title>Identification of genes subject to positive selection in uropathogenic strains of Escherichia coli: a comparative genomics approach.</title>
        <authorList>
            <person name="Chen S.L."/>
            <person name="Hung C.-S."/>
            <person name="Xu J."/>
            <person name="Reigstad C.S."/>
            <person name="Magrini V."/>
            <person name="Sabo A."/>
            <person name="Blasiar D."/>
            <person name="Bieri T."/>
            <person name="Meyer R.R."/>
            <person name="Ozersky P."/>
            <person name="Armstrong J.R."/>
            <person name="Fulton R.S."/>
            <person name="Latreille J.P."/>
            <person name="Spieth J."/>
            <person name="Hooton T.M."/>
            <person name="Mardis E.R."/>
            <person name="Hultgren S.J."/>
            <person name="Gordon J.I."/>
        </authorList>
    </citation>
    <scope>NUCLEOTIDE SEQUENCE [LARGE SCALE GENOMIC DNA]</scope>
    <source>
        <strain>UTI89 / UPEC</strain>
    </source>
</reference>
<proteinExistence type="inferred from homology"/>
<accession>Q1RGC5</accession>
<name>LEUC_ECOUT</name>
<gene>
    <name evidence="1" type="primary">leuC</name>
    <name type="ordered locus">UTI89_C0079</name>
</gene>
<organism>
    <name type="scientific">Escherichia coli (strain UTI89 / UPEC)</name>
    <dbReference type="NCBI Taxonomy" id="364106"/>
    <lineage>
        <taxon>Bacteria</taxon>
        <taxon>Pseudomonadati</taxon>
        <taxon>Pseudomonadota</taxon>
        <taxon>Gammaproteobacteria</taxon>
        <taxon>Enterobacterales</taxon>
        <taxon>Enterobacteriaceae</taxon>
        <taxon>Escherichia</taxon>
    </lineage>
</organism>
<sequence length="466" mass="49882">MAKTLYEKLFDAHVVYEAENETPLLYIDRHLVHEVTSPQAFDGLRAHGRPVRQPGKTFATMDHNVSTQTKDINACGEMARIQMQELIKNCKEFGVELYDLNHPYQGIVHVMGPEQGVTLPGMTIVCGDSHTATHGAFGALAFGIGTSEVEHVLATQTLKQGRAKTMKIEVQGKAAPGITAKDIVLAIIGKTGSAGGTGHVVEFCGEAIRDLSMEGRMTLCNMAIEMGAKAGLVAPDETTFNYVKGRLHAPKGKDFDDAVAYWKTLQTDEGATFDTVVTLQAEEISPQVTWGTNPGQVISVNDNIPDPASFADPVERASAEKALAYMGLKPGIPLTEVAIDKVFIGSCTNSRIEDLRAAAEIAKGRKVAPGVQALVVPGSGPVKAQAEAEGLDKIFIEAGFEWRLPGCSMCLAMNNDRLNPGERCASTSNRNFEGRQGRGGRTHLVSPAMAAAAAVTGHFADIRNIK</sequence>